<keyword id="KW-0001">2Fe-2S</keyword>
<keyword id="KW-0028">Amino-acid biosynthesis</keyword>
<keyword id="KW-0100">Branched-chain amino acid biosynthesis</keyword>
<keyword id="KW-0408">Iron</keyword>
<keyword id="KW-0411">Iron-sulfur</keyword>
<keyword id="KW-0456">Lyase</keyword>
<keyword id="KW-0460">Magnesium</keyword>
<keyword id="KW-0479">Metal-binding</keyword>
<name>ILVD_BURM7</name>
<dbReference type="EC" id="4.2.1.9" evidence="1"/>
<dbReference type="EMBL" id="CP000548">
    <property type="protein sequence ID" value="ABO06405.1"/>
    <property type="molecule type" value="Genomic_DNA"/>
</dbReference>
<dbReference type="RefSeq" id="WP_004191611.1">
    <property type="nucleotide sequence ID" value="NZ_CP007802.1"/>
</dbReference>
<dbReference type="SMR" id="A3MLQ5"/>
<dbReference type="GeneID" id="92978440"/>
<dbReference type="KEGG" id="bmaz:BM44_1528"/>
<dbReference type="KEGG" id="bmn:BMA10247_1647"/>
<dbReference type="PATRIC" id="fig|320389.8.peg.1708"/>
<dbReference type="UniPathway" id="UPA00047">
    <property type="reaction ID" value="UER00057"/>
</dbReference>
<dbReference type="UniPathway" id="UPA00049">
    <property type="reaction ID" value="UER00061"/>
</dbReference>
<dbReference type="GO" id="GO:0051537">
    <property type="term" value="F:2 iron, 2 sulfur cluster binding"/>
    <property type="evidence" value="ECO:0007669"/>
    <property type="project" value="UniProtKB-UniRule"/>
</dbReference>
<dbReference type="GO" id="GO:0004160">
    <property type="term" value="F:dihydroxy-acid dehydratase activity"/>
    <property type="evidence" value="ECO:0007669"/>
    <property type="project" value="UniProtKB-UniRule"/>
</dbReference>
<dbReference type="GO" id="GO:0000287">
    <property type="term" value="F:magnesium ion binding"/>
    <property type="evidence" value="ECO:0007669"/>
    <property type="project" value="UniProtKB-UniRule"/>
</dbReference>
<dbReference type="GO" id="GO:0009097">
    <property type="term" value="P:isoleucine biosynthetic process"/>
    <property type="evidence" value="ECO:0007669"/>
    <property type="project" value="UniProtKB-UniRule"/>
</dbReference>
<dbReference type="GO" id="GO:0009099">
    <property type="term" value="P:L-valine biosynthetic process"/>
    <property type="evidence" value="ECO:0007669"/>
    <property type="project" value="UniProtKB-UniRule"/>
</dbReference>
<dbReference type="FunFam" id="3.50.30.80:FF:000001">
    <property type="entry name" value="Dihydroxy-acid dehydratase"/>
    <property type="match status" value="1"/>
</dbReference>
<dbReference type="Gene3D" id="3.50.30.80">
    <property type="entry name" value="IlvD/EDD C-terminal domain-like"/>
    <property type="match status" value="1"/>
</dbReference>
<dbReference type="HAMAP" id="MF_00012">
    <property type="entry name" value="IlvD"/>
    <property type="match status" value="1"/>
</dbReference>
<dbReference type="InterPro" id="IPR050165">
    <property type="entry name" value="DHAD_IlvD/Edd"/>
</dbReference>
<dbReference type="InterPro" id="IPR042096">
    <property type="entry name" value="Dihydro-acid_dehy_C"/>
</dbReference>
<dbReference type="InterPro" id="IPR004404">
    <property type="entry name" value="DihydroxyA_deHydtase"/>
</dbReference>
<dbReference type="InterPro" id="IPR020558">
    <property type="entry name" value="DiOHA_6PGluconate_deHydtase_CS"/>
</dbReference>
<dbReference type="InterPro" id="IPR056740">
    <property type="entry name" value="ILV_EDD_C"/>
</dbReference>
<dbReference type="InterPro" id="IPR000581">
    <property type="entry name" value="ILV_EDD_N"/>
</dbReference>
<dbReference type="InterPro" id="IPR037237">
    <property type="entry name" value="IlvD/EDD_N"/>
</dbReference>
<dbReference type="NCBIfam" id="TIGR00110">
    <property type="entry name" value="ilvD"/>
    <property type="match status" value="1"/>
</dbReference>
<dbReference type="NCBIfam" id="NF002068">
    <property type="entry name" value="PRK00911.1"/>
    <property type="match status" value="1"/>
</dbReference>
<dbReference type="PANTHER" id="PTHR21000">
    <property type="entry name" value="DIHYDROXY-ACID DEHYDRATASE DAD"/>
    <property type="match status" value="1"/>
</dbReference>
<dbReference type="PANTHER" id="PTHR21000:SF5">
    <property type="entry name" value="DIHYDROXY-ACID DEHYDRATASE, MITOCHONDRIAL"/>
    <property type="match status" value="1"/>
</dbReference>
<dbReference type="Pfam" id="PF24877">
    <property type="entry name" value="ILV_EDD_C"/>
    <property type="match status" value="1"/>
</dbReference>
<dbReference type="Pfam" id="PF00920">
    <property type="entry name" value="ILVD_EDD_N"/>
    <property type="match status" value="1"/>
</dbReference>
<dbReference type="SUPFAM" id="SSF143975">
    <property type="entry name" value="IlvD/EDD N-terminal domain-like"/>
    <property type="match status" value="1"/>
</dbReference>
<dbReference type="SUPFAM" id="SSF52016">
    <property type="entry name" value="LeuD/IlvD-like"/>
    <property type="match status" value="1"/>
</dbReference>
<dbReference type="PROSITE" id="PS00886">
    <property type="entry name" value="ILVD_EDD_1"/>
    <property type="match status" value="1"/>
</dbReference>
<dbReference type="PROSITE" id="PS00887">
    <property type="entry name" value="ILVD_EDD_2"/>
    <property type="match status" value="1"/>
</dbReference>
<protein>
    <recommendedName>
        <fullName evidence="1">Dihydroxy-acid dehydratase</fullName>
        <shortName evidence="1">DAD</shortName>
        <ecNumber evidence="1">4.2.1.9</ecNumber>
    </recommendedName>
</protein>
<accession>A3MLQ5</accession>
<feature type="chain" id="PRO_1000000961" description="Dihydroxy-acid dehydratase">
    <location>
        <begin position="1"/>
        <end position="557"/>
    </location>
</feature>
<feature type="active site" description="Proton acceptor" evidence="1">
    <location>
        <position position="473"/>
    </location>
</feature>
<feature type="binding site" evidence="1">
    <location>
        <position position="50"/>
    </location>
    <ligand>
        <name>[2Fe-2S] cluster</name>
        <dbReference type="ChEBI" id="CHEBI:190135"/>
    </ligand>
</feature>
<feature type="binding site" evidence="1">
    <location>
        <position position="82"/>
    </location>
    <ligand>
        <name>Mg(2+)</name>
        <dbReference type="ChEBI" id="CHEBI:18420"/>
    </ligand>
</feature>
<feature type="binding site" evidence="1">
    <location>
        <position position="123"/>
    </location>
    <ligand>
        <name>[2Fe-2S] cluster</name>
        <dbReference type="ChEBI" id="CHEBI:190135"/>
    </ligand>
</feature>
<feature type="binding site" evidence="1">
    <location>
        <position position="124"/>
    </location>
    <ligand>
        <name>Mg(2+)</name>
        <dbReference type="ChEBI" id="CHEBI:18420"/>
    </ligand>
</feature>
<feature type="binding site" description="via carbamate group" evidence="1">
    <location>
        <position position="125"/>
    </location>
    <ligand>
        <name>Mg(2+)</name>
        <dbReference type="ChEBI" id="CHEBI:18420"/>
    </ligand>
</feature>
<feature type="binding site" evidence="1">
    <location>
        <position position="195"/>
    </location>
    <ligand>
        <name>[2Fe-2S] cluster</name>
        <dbReference type="ChEBI" id="CHEBI:190135"/>
    </ligand>
</feature>
<feature type="binding site" evidence="1">
    <location>
        <position position="447"/>
    </location>
    <ligand>
        <name>Mg(2+)</name>
        <dbReference type="ChEBI" id="CHEBI:18420"/>
    </ligand>
</feature>
<feature type="modified residue" description="N6-carboxylysine" evidence="1">
    <location>
        <position position="125"/>
    </location>
</feature>
<organism>
    <name type="scientific">Burkholderia mallei (strain NCTC 10247)</name>
    <dbReference type="NCBI Taxonomy" id="320389"/>
    <lineage>
        <taxon>Bacteria</taxon>
        <taxon>Pseudomonadati</taxon>
        <taxon>Pseudomonadota</taxon>
        <taxon>Betaproteobacteria</taxon>
        <taxon>Burkholderiales</taxon>
        <taxon>Burkholderiaceae</taxon>
        <taxon>Burkholderia</taxon>
        <taxon>pseudomallei group</taxon>
    </lineage>
</organism>
<sequence>MSYNRRSKNITQGVARSPNRSMYYALGYQKEDFDKPMIGIANGHSTITPCNAGLQRLSDAAVAAVKDAGANPQIFGTPTISDGMSMGTEGMKYSLVSREVIADCIETCVQGQWMDGVVVVGGCDKNMPGGMIALARINVPGIYVYGGTIRPGHWKGHDLTIVSSFEAVGEFTAGRMSQEDFEGVEKNACPTTGSCGGMYTANTMSSSFEALGMSLLYSSTMANPDQEKVDSAAESARVLVEAVKKDLKPRDIITKQSIENAVSVIMATGGSTNAVLHYLAIAHAAEIDWSIEDFERIRKRVPVICDLKPSGQYVATDLHAAGGIPQVMKLLLDAGLLHGDCMTITGRTLAEELKDVPSVPRADQKVIHPIDQALYKEGHLAILKGNLAEDGAVAKITGLKNPVITGPARVFDDEQSALAAILDDRIRAGDVVVLRYLGPQGGPGMPEMLAPTSAIIGKGLGESVGLITDGRFSGGTWGMVVGHVAPEAFVGGTIALVQEGDSITIDAHKLLLQLNVDDAELARRRAAWKQPAPRYTRGVLAKYAALARPANQGAVTG</sequence>
<gene>
    <name evidence="1" type="primary">ilvD</name>
    <name type="ordered locus">BMA10247_1647</name>
</gene>
<comment type="function">
    <text evidence="1">Functions in the biosynthesis of branched-chain amino acids. Catalyzes the dehydration of (2R,3R)-2,3-dihydroxy-3-methylpentanoate (2,3-dihydroxy-3-methylvalerate) into 2-oxo-3-methylpentanoate (2-oxo-3-methylvalerate) and of (2R)-2,3-dihydroxy-3-methylbutanoate (2,3-dihydroxyisovalerate) into 2-oxo-3-methylbutanoate (2-oxoisovalerate), the penultimate precursor to L-isoleucine and L-valine, respectively.</text>
</comment>
<comment type="catalytic activity">
    <reaction evidence="1">
        <text>(2R)-2,3-dihydroxy-3-methylbutanoate = 3-methyl-2-oxobutanoate + H2O</text>
        <dbReference type="Rhea" id="RHEA:24809"/>
        <dbReference type="ChEBI" id="CHEBI:11851"/>
        <dbReference type="ChEBI" id="CHEBI:15377"/>
        <dbReference type="ChEBI" id="CHEBI:49072"/>
        <dbReference type="EC" id="4.2.1.9"/>
    </reaction>
    <physiologicalReaction direction="left-to-right" evidence="1">
        <dbReference type="Rhea" id="RHEA:24810"/>
    </physiologicalReaction>
</comment>
<comment type="catalytic activity">
    <reaction evidence="1">
        <text>(2R,3R)-2,3-dihydroxy-3-methylpentanoate = (S)-3-methyl-2-oxopentanoate + H2O</text>
        <dbReference type="Rhea" id="RHEA:27694"/>
        <dbReference type="ChEBI" id="CHEBI:15377"/>
        <dbReference type="ChEBI" id="CHEBI:35146"/>
        <dbReference type="ChEBI" id="CHEBI:49258"/>
        <dbReference type="EC" id="4.2.1.9"/>
    </reaction>
    <physiologicalReaction direction="left-to-right" evidence="1">
        <dbReference type="Rhea" id="RHEA:27695"/>
    </physiologicalReaction>
</comment>
<comment type="cofactor">
    <cofactor evidence="1">
        <name>[2Fe-2S] cluster</name>
        <dbReference type="ChEBI" id="CHEBI:190135"/>
    </cofactor>
    <text evidence="1">Binds 1 [2Fe-2S] cluster per subunit. This cluster acts as a Lewis acid cofactor.</text>
</comment>
<comment type="cofactor">
    <cofactor evidence="1">
        <name>Mg(2+)</name>
        <dbReference type="ChEBI" id="CHEBI:18420"/>
    </cofactor>
</comment>
<comment type="pathway">
    <text evidence="1">Amino-acid biosynthesis; L-isoleucine biosynthesis; L-isoleucine from 2-oxobutanoate: step 3/4.</text>
</comment>
<comment type="pathway">
    <text evidence="1">Amino-acid biosynthesis; L-valine biosynthesis; L-valine from pyruvate: step 3/4.</text>
</comment>
<comment type="subunit">
    <text evidence="1">Homodimer.</text>
</comment>
<comment type="similarity">
    <text evidence="1">Belongs to the IlvD/Edd family.</text>
</comment>
<evidence type="ECO:0000255" key="1">
    <source>
        <dbReference type="HAMAP-Rule" id="MF_00012"/>
    </source>
</evidence>
<proteinExistence type="inferred from homology"/>
<reference key="1">
    <citation type="journal article" date="2010" name="Genome Biol. Evol.">
        <title>Continuing evolution of Burkholderia mallei through genome reduction and large-scale rearrangements.</title>
        <authorList>
            <person name="Losada L."/>
            <person name="Ronning C.M."/>
            <person name="DeShazer D."/>
            <person name="Woods D."/>
            <person name="Fedorova N."/>
            <person name="Kim H.S."/>
            <person name="Shabalina S.A."/>
            <person name="Pearson T.R."/>
            <person name="Brinkac L."/>
            <person name="Tan P."/>
            <person name="Nandi T."/>
            <person name="Crabtree J."/>
            <person name="Badger J."/>
            <person name="Beckstrom-Sternberg S."/>
            <person name="Saqib M."/>
            <person name="Schutzer S.E."/>
            <person name="Keim P."/>
            <person name="Nierman W.C."/>
        </authorList>
    </citation>
    <scope>NUCLEOTIDE SEQUENCE [LARGE SCALE GENOMIC DNA]</scope>
    <source>
        <strain>NCTC 10247</strain>
    </source>
</reference>